<sequence>MLPTGEGAEGQDWHLDMQLPSKVVLSAAALLLVTAAYKLYKSRPAPVGQAGRNNKDHKAENETEALGQLAFQEAPPGTLPRGRRRRKASKGAGTSLDYSLVDPEDPCILDISRSEEATRKGSDESQGRQCPDSQQVPPPCGGQEAGTDVRGKPNPPHLPHSGCEPTSSSGRLIPGVGGSCVGDKLSPWPDSRPPEETGSGDLEAPNGWTDLTLVNGDMNQSWIFTHMTGVSRGEAGVLQAAADMGLATQQQEGATNASHTFSSVARIRMEENIIQKAEGPGLKGRVYDYFVESTSKADSRPVPCPAALADAPSPGPGPEPLVTGAASRDEAANTAGGGASEAASPQPVASPSAPGFSRKVSLLQIAENPELQLQPEGFRMPLPAHLDQRAQLSSACSHGEPHVQLVAGTNFFHIPLTPASALDVRLDLGNCYEMLTLAKRQGLETLKEAAYKVLSDNYLQVLRSPDIYGGLSGAERELILQRRFRGHKRLVVADMCPQDDSGRLCCYDNVQDAWHPLAQLPPEAMSRGCALCTLFNYLFVVSGCQEPGGQPSNRVFCYNPLTAIWSEVCPLNQARPHCRLVALEGHLYAIGGECLNTVERYDPRLDRWTFAPPLPNDTFALAHTATVCANEIFVTGGSLRYLLLRFSTQEQRWWAGPTGGSKDRTAEMVAVNGFLYRFDLNRSLGISVYRCSASTRLWYECATYRLPYPDAFQCAVVDDHIYCVGRRRMLCFLADHISPRFVSKELKGFPSARGTLLPAVLTLPVPDVPQTPV</sequence>
<keyword id="KW-0325">Glycoprotein</keyword>
<keyword id="KW-0880">Kelch repeat</keyword>
<keyword id="KW-0472">Membrane</keyword>
<keyword id="KW-0597">Phosphoprotein</keyword>
<keyword id="KW-1185">Reference proteome</keyword>
<keyword id="KW-0677">Repeat</keyword>
<keyword id="KW-0812">Transmembrane</keyword>
<keyword id="KW-1133">Transmembrane helix</keyword>
<proteinExistence type="evidence at protein level"/>
<gene>
    <name type="primary">Klhdc7a</name>
</gene>
<protein>
    <recommendedName>
        <fullName>Kelch domain-containing protein 7A</fullName>
    </recommendedName>
</protein>
<name>KLD7A_MOUSE</name>
<accession>A2APT9</accession>
<accession>Q80SV4</accession>
<accession>Q8C706</accession>
<reference key="1">
    <citation type="journal article" date="2009" name="PLoS Biol.">
        <title>Lineage-specific biology revealed by a finished genome assembly of the mouse.</title>
        <authorList>
            <person name="Church D.M."/>
            <person name="Goodstadt L."/>
            <person name="Hillier L.W."/>
            <person name="Zody M.C."/>
            <person name="Goldstein S."/>
            <person name="She X."/>
            <person name="Bult C.J."/>
            <person name="Agarwala R."/>
            <person name="Cherry J.L."/>
            <person name="DiCuccio M."/>
            <person name="Hlavina W."/>
            <person name="Kapustin Y."/>
            <person name="Meric P."/>
            <person name="Maglott D."/>
            <person name="Birtle Z."/>
            <person name="Marques A.C."/>
            <person name="Graves T."/>
            <person name="Zhou S."/>
            <person name="Teague B."/>
            <person name="Potamousis K."/>
            <person name="Churas C."/>
            <person name="Place M."/>
            <person name="Herschleb J."/>
            <person name="Runnheim R."/>
            <person name="Forrest D."/>
            <person name="Amos-Landgraf J."/>
            <person name="Schwartz D.C."/>
            <person name="Cheng Z."/>
            <person name="Lindblad-Toh K."/>
            <person name="Eichler E.E."/>
            <person name="Ponting C.P."/>
        </authorList>
    </citation>
    <scope>NUCLEOTIDE SEQUENCE [LARGE SCALE GENOMIC DNA]</scope>
    <source>
        <strain>C57BL/6J</strain>
    </source>
</reference>
<reference key="2">
    <citation type="journal article" date="2005" name="Science">
        <title>The transcriptional landscape of the mammalian genome.</title>
        <authorList>
            <person name="Carninci P."/>
            <person name="Kasukawa T."/>
            <person name="Katayama S."/>
            <person name="Gough J."/>
            <person name="Frith M.C."/>
            <person name="Maeda N."/>
            <person name="Oyama R."/>
            <person name="Ravasi T."/>
            <person name="Lenhard B."/>
            <person name="Wells C."/>
            <person name="Kodzius R."/>
            <person name="Shimokawa K."/>
            <person name="Bajic V.B."/>
            <person name="Brenner S.E."/>
            <person name="Batalov S."/>
            <person name="Forrest A.R."/>
            <person name="Zavolan M."/>
            <person name="Davis M.J."/>
            <person name="Wilming L.G."/>
            <person name="Aidinis V."/>
            <person name="Allen J.E."/>
            <person name="Ambesi-Impiombato A."/>
            <person name="Apweiler R."/>
            <person name="Aturaliya R.N."/>
            <person name="Bailey T.L."/>
            <person name="Bansal M."/>
            <person name="Baxter L."/>
            <person name="Beisel K.W."/>
            <person name="Bersano T."/>
            <person name="Bono H."/>
            <person name="Chalk A.M."/>
            <person name="Chiu K.P."/>
            <person name="Choudhary V."/>
            <person name="Christoffels A."/>
            <person name="Clutterbuck D.R."/>
            <person name="Crowe M.L."/>
            <person name="Dalla E."/>
            <person name="Dalrymple B.P."/>
            <person name="de Bono B."/>
            <person name="Della Gatta G."/>
            <person name="di Bernardo D."/>
            <person name="Down T."/>
            <person name="Engstrom P."/>
            <person name="Fagiolini M."/>
            <person name="Faulkner G."/>
            <person name="Fletcher C.F."/>
            <person name="Fukushima T."/>
            <person name="Furuno M."/>
            <person name="Futaki S."/>
            <person name="Gariboldi M."/>
            <person name="Georgii-Hemming P."/>
            <person name="Gingeras T.R."/>
            <person name="Gojobori T."/>
            <person name="Green R.E."/>
            <person name="Gustincich S."/>
            <person name="Harbers M."/>
            <person name="Hayashi Y."/>
            <person name="Hensch T.K."/>
            <person name="Hirokawa N."/>
            <person name="Hill D."/>
            <person name="Huminiecki L."/>
            <person name="Iacono M."/>
            <person name="Ikeo K."/>
            <person name="Iwama A."/>
            <person name="Ishikawa T."/>
            <person name="Jakt M."/>
            <person name="Kanapin A."/>
            <person name="Katoh M."/>
            <person name="Kawasawa Y."/>
            <person name="Kelso J."/>
            <person name="Kitamura H."/>
            <person name="Kitano H."/>
            <person name="Kollias G."/>
            <person name="Krishnan S.P."/>
            <person name="Kruger A."/>
            <person name="Kummerfeld S.K."/>
            <person name="Kurochkin I.V."/>
            <person name="Lareau L.F."/>
            <person name="Lazarevic D."/>
            <person name="Lipovich L."/>
            <person name="Liu J."/>
            <person name="Liuni S."/>
            <person name="McWilliam S."/>
            <person name="Madan Babu M."/>
            <person name="Madera M."/>
            <person name="Marchionni L."/>
            <person name="Matsuda H."/>
            <person name="Matsuzawa S."/>
            <person name="Miki H."/>
            <person name="Mignone F."/>
            <person name="Miyake S."/>
            <person name="Morris K."/>
            <person name="Mottagui-Tabar S."/>
            <person name="Mulder N."/>
            <person name="Nakano N."/>
            <person name="Nakauchi H."/>
            <person name="Ng P."/>
            <person name="Nilsson R."/>
            <person name="Nishiguchi S."/>
            <person name="Nishikawa S."/>
            <person name="Nori F."/>
            <person name="Ohara O."/>
            <person name="Okazaki Y."/>
            <person name="Orlando V."/>
            <person name="Pang K.C."/>
            <person name="Pavan W.J."/>
            <person name="Pavesi G."/>
            <person name="Pesole G."/>
            <person name="Petrovsky N."/>
            <person name="Piazza S."/>
            <person name="Reed J."/>
            <person name="Reid J.F."/>
            <person name="Ring B.Z."/>
            <person name="Ringwald M."/>
            <person name="Rost B."/>
            <person name="Ruan Y."/>
            <person name="Salzberg S.L."/>
            <person name="Sandelin A."/>
            <person name="Schneider C."/>
            <person name="Schoenbach C."/>
            <person name="Sekiguchi K."/>
            <person name="Semple C.A."/>
            <person name="Seno S."/>
            <person name="Sessa L."/>
            <person name="Sheng Y."/>
            <person name="Shibata Y."/>
            <person name="Shimada H."/>
            <person name="Shimada K."/>
            <person name="Silva D."/>
            <person name="Sinclair B."/>
            <person name="Sperling S."/>
            <person name="Stupka E."/>
            <person name="Sugiura K."/>
            <person name="Sultana R."/>
            <person name="Takenaka Y."/>
            <person name="Taki K."/>
            <person name="Tammoja K."/>
            <person name="Tan S.L."/>
            <person name="Tang S."/>
            <person name="Taylor M.S."/>
            <person name="Tegner J."/>
            <person name="Teichmann S.A."/>
            <person name="Ueda H.R."/>
            <person name="van Nimwegen E."/>
            <person name="Verardo R."/>
            <person name="Wei C.L."/>
            <person name="Yagi K."/>
            <person name="Yamanishi H."/>
            <person name="Zabarovsky E."/>
            <person name="Zhu S."/>
            <person name="Zimmer A."/>
            <person name="Hide W."/>
            <person name="Bult C."/>
            <person name="Grimmond S.M."/>
            <person name="Teasdale R.D."/>
            <person name="Liu E.T."/>
            <person name="Brusic V."/>
            <person name="Quackenbush J."/>
            <person name="Wahlestedt C."/>
            <person name="Mattick J.S."/>
            <person name="Hume D.A."/>
            <person name="Kai C."/>
            <person name="Sasaki D."/>
            <person name="Tomaru Y."/>
            <person name="Fukuda S."/>
            <person name="Kanamori-Katayama M."/>
            <person name="Suzuki M."/>
            <person name="Aoki J."/>
            <person name="Arakawa T."/>
            <person name="Iida J."/>
            <person name="Imamura K."/>
            <person name="Itoh M."/>
            <person name="Kato T."/>
            <person name="Kawaji H."/>
            <person name="Kawagashira N."/>
            <person name="Kawashima T."/>
            <person name="Kojima M."/>
            <person name="Kondo S."/>
            <person name="Konno H."/>
            <person name="Nakano K."/>
            <person name="Ninomiya N."/>
            <person name="Nishio T."/>
            <person name="Okada M."/>
            <person name="Plessy C."/>
            <person name="Shibata K."/>
            <person name="Shiraki T."/>
            <person name="Suzuki S."/>
            <person name="Tagami M."/>
            <person name="Waki K."/>
            <person name="Watahiki A."/>
            <person name="Okamura-Oho Y."/>
            <person name="Suzuki H."/>
            <person name="Kawai J."/>
            <person name="Hayashizaki Y."/>
        </authorList>
    </citation>
    <scope>NUCLEOTIDE SEQUENCE [LARGE SCALE MRNA] OF 14-759</scope>
    <source>
        <strain>C57BL/6J</strain>
        <tissue>Kidney</tissue>
    </source>
</reference>
<reference key="3">
    <citation type="journal article" date="2004" name="Genome Res.">
        <title>The status, quality, and expansion of the NIH full-length cDNA project: the Mammalian Gene Collection (MGC).</title>
        <authorList>
            <consortium name="The MGC Project Team"/>
        </authorList>
    </citation>
    <scope>NUCLEOTIDE SEQUENCE [LARGE SCALE MRNA] OF 358-773</scope>
    <source>
        <strain>FVB/N</strain>
        <tissue>Kidney</tissue>
    </source>
</reference>
<reference key="4">
    <citation type="journal article" date="2007" name="Proc. Natl. Acad. Sci. U.S.A.">
        <title>Large-scale phosphorylation analysis of mouse liver.</title>
        <authorList>
            <person name="Villen J."/>
            <person name="Beausoleil S.A."/>
            <person name="Gerber S.A."/>
            <person name="Gygi S.P."/>
        </authorList>
    </citation>
    <scope>PHOSPHORYLATION [LARGE SCALE ANALYSIS] AT SER-361</scope>
    <scope>IDENTIFICATION BY MASS SPECTROMETRY [LARGE SCALE ANALYSIS]</scope>
    <source>
        <tissue>Liver</tissue>
    </source>
</reference>
<reference key="5">
    <citation type="journal article" date="2010" name="Cell">
        <title>A tissue-specific atlas of mouse protein phosphorylation and expression.</title>
        <authorList>
            <person name="Huttlin E.L."/>
            <person name="Jedrychowski M.P."/>
            <person name="Elias J.E."/>
            <person name="Goswami T."/>
            <person name="Rad R."/>
            <person name="Beausoleil S.A."/>
            <person name="Villen J."/>
            <person name="Haas W."/>
            <person name="Sowa M.E."/>
            <person name="Gygi S.P."/>
        </authorList>
    </citation>
    <scope>PHOSPHORYLATION [LARGE SCALE ANALYSIS] AT SER-89 AND SER-361</scope>
    <scope>IDENTIFICATION BY MASS SPECTROMETRY [LARGE SCALE ANALYSIS]</scope>
    <source>
        <tissue>Brain</tissue>
        <tissue>Brown adipose tissue</tissue>
        <tissue>Kidney</tissue>
        <tissue>Liver</tissue>
        <tissue>Pancreas</tissue>
    </source>
</reference>
<dbReference type="EMBL" id="AL844480">
    <property type="status" value="NOT_ANNOTATED_CDS"/>
    <property type="molecule type" value="Genomic_DNA"/>
</dbReference>
<dbReference type="EMBL" id="AK052747">
    <property type="protein sequence ID" value="BAC35129.1"/>
    <property type="status" value="ALT_SEQ"/>
    <property type="molecule type" value="mRNA"/>
</dbReference>
<dbReference type="EMBL" id="BC043462">
    <property type="protein sequence ID" value="AAH43462.1"/>
    <property type="molecule type" value="mRNA"/>
</dbReference>
<dbReference type="EMBL" id="BC043672">
    <property type="protein sequence ID" value="AAH43672.1"/>
    <property type="molecule type" value="mRNA"/>
</dbReference>
<dbReference type="CCDS" id="CCDS38935.1"/>
<dbReference type="RefSeq" id="NP_775603.2">
    <property type="nucleotide sequence ID" value="NM_173427.2"/>
</dbReference>
<dbReference type="SMR" id="A2APT9"/>
<dbReference type="BioGRID" id="232450">
    <property type="interactions" value="1"/>
</dbReference>
<dbReference type="STRING" id="10090.ENSMUSP00000100648"/>
<dbReference type="GlyCosmos" id="A2APT9">
    <property type="glycosylation" value="2 sites, No reported glycans"/>
</dbReference>
<dbReference type="GlyGen" id="A2APT9">
    <property type="glycosylation" value="3 sites"/>
</dbReference>
<dbReference type="iPTMnet" id="A2APT9"/>
<dbReference type="PhosphoSitePlus" id="A2APT9"/>
<dbReference type="jPOST" id="A2APT9"/>
<dbReference type="PaxDb" id="10090-ENSMUSP00000100648"/>
<dbReference type="ProteomicsDB" id="263448"/>
<dbReference type="Antibodypedia" id="64774">
    <property type="antibodies" value="5 antibodies from 5 providers"/>
</dbReference>
<dbReference type="Ensembl" id="ENSMUST00000105031.4">
    <property type="protein sequence ID" value="ENSMUSP00000100648.3"/>
    <property type="gene ID" value="ENSMUSG00000078234.7"/>
</dbReference>
<dbReference type="GeneID" id="242721"/>
<dbReference type="KEGG" id="mmu:242721"/>
<dbReference type="UCSC" id="uc008vmt.1">
    <property type="organism name" value="mouse"/>
</dbReference>
<dbReference type="AGR" id="MGI:2444612"/>
<dbReference type="CTD" id="127707"/>
<dbReference type="MGI" id="MGI:2444612">
    <property type="gene designation" value="Klhdc7a"/>
</dbReference>
<dbReference type="VEuPathDB" id="HostDB:ENSMUSG00000078234"/>
<dbReference type="eggNOG" id="KOG1072">
    <property type="taxonomic scope" value="Eukaryota"/>
</dbReference>
<dbReference type="GeneTree" id="ENSGT00940000162724"/>
<dbReference type="HOGENOM" id="CLU_020313_1_0_1"/>
<dbReference type="InParanoid" id="A2APT9"/>
<dbReference type="OMA" id="GTNFFHI"/>
<dbReference type="OrthoDB" id="45365at2759"/>
<dbReference type="PhylomeDB" id="A2APT9"/>
<dbReference type="TreeFam" id="TF328485"/>
<dbReference type="BioGRID-ORCS" id="242721">
    <property type="hits" value="0 hits in 76 CRISPR screens"/>
</dbReference>
<dbReference type="ChiTaRS" id="Klhdc7a">
    <property type="organism name" value="mouse"/>
</dbReference>
<dbReference type="PRO" id="PR:A2APT9"/>
<dbReference type="Proteomes" id="UP000000589">
    <property type="component" value="Chromosome 4"/>
</dbReference>
<dbReference type="RNAct" id="A2APT9">
    <property type="molecule type" value="protein"/>
</dbReference>
<dbReference type="Bgee" id="ENSMUSG00000078234">
    <property type="expression patterns" value="Expressed in lumbar subsegment of spinal cord and 66 other cell types or tissues"/>
</dbReference>
<dbReference type="GO" id="GO:0016020">
    <property type="term" value="C:membrane"/>
    <property type="evidence" value="ECO:0007669"/>
    <property type="project" value="UniProtKB-SubCell"/>
</dbReference>
<dbReference type="Gene3D" id="2.120.10.80">
    <property type="entry name" value="Kelch-type beta propeller"/>
    <property type="match status" value="1"/>
</dbReference>
<dbReference type="InterPro" id="IPR015915">
    <property type="entry name" value="Kelch-typ_b-propeller"/>
</dbReference>
<dbReference type="InterPro" id="IPR052310">
    <property type="entry name" value="Kelch/BTB_domain_protein"/>
</dbReference>
<dbReference type="InterPro" id="IPR006652">
    <property type="entry name" value="Kelch_1"/>
</dbReference>
<dbReference type="PANTHER" id="PTHR45972">
    <property type="entry name" value="BTB_2 DOMAIN-CONTAINING PROTEIN"/>
    <property type="match status" value="1"/>
</dbReference>
<dbReference type="PANTHER" id="PTHR45972:SF1">
    <property type="entry name" value="KELCH DOMAIN-CONTAINING PROTEIN 7A"/>
    <property type="match status" value="1"/>
</dbReference>
<dbReference type="Pfam" id="PF01344">
    <property type="entry name" value="Kelch_1"/>
    <property type="match status" value="2"/>
</dbReference>
<dbReference type="SMART" id="SM00612">
    <property type="entry name" value="Kelch"/>
    <property type="match status" value="2"/>
</dbReference>
<dbReference type="SUPFAM" id="SSF117281">
    <property type="entry name" value="Kelch motif"/>
    <property type="match status" value="1"/>
</dbReference>
<feature type="chain" id="PRO_0000285086" description="Kelch domain-containing protein 7A">
    <location>
        <begin position="1"/>
        <end position="773"/>
    </location>
</feature>
<feature type="transmembrane region" description="Helical" evidence="1">
    <location>
        <begin position="23"/>
        <end position="40"/>
    </location>
</feature>
<feature type="repeat" description="Kelch 1">
    <location>
        <begin position="323"/>
        <end position="370"/>
    </location>
</feature>
<feature type="repeat" description="Kelch 2">
    <location>
        <begin position="488"/>
        <end position="534"/>
    </location>
</feature>
<feature type="repeat" description="Kelch 3">
    <location>
        <begin position="537"/>
        <end position="585"/>
    </location>
</feature>
<feature type="repeat" description="Kelch 4">
    <location>
        <begin position="586"/>
        <end position="628"/>
    </location>
</feature>
<feature type="repeat" description="Kelch 5">
    <location>
        <begin position="631"/>
        <end position="673"/>
    </location>
</feature>
<feature type="region of interest" description="Disordered" evidence="2">
    <location>
        <begin position="64"/>
        <end position="99"/>
    </location>
</feature>
<feature type="region of interest" description="Disordered" evidence="2">
    <location>
        <begin position="114"/>
        <end position="207"/>
    </location>
</feature>
<feature type="region of interest" description="Disordered" evidence="2">
    <location>
        <begin position="296"/>
        <end position="355"/>
    </location>
</feature>
<feature type="compositionally biased region" description="Basic and acidic residues" evidence="2">
    <location>
        <begin position="114"/>
        <end position="126"/>
    </location>
</feature>
<feature type="compositionally biased region" description="Low complexity" evidence="2">
    <location>
        <begin position="340"/>
        <end position="354"/>
    </location>
</feature>
<feature type="modified residue" description="Phosphoserine" evidence="5">
    <location>
        <position position="89"/>
    </location>
</feature>
<feature type="modified residue" description="Phosphoserine" evidence="4 5">
    <location>
        <position position="361"/>
    </location>
</feature>
<feature type="glycosylation site" description="N-linked (GlcNAc...) asparagine" evidence="1">
    <location>
        <position position="61"/>
    </location>
</feature>
<feature type="glycosylation site" description="N-linked (GlcNAc...) asparagine" evidence="1">
    <location>
        <position position="256"/>
    </location>
</feature>
<feature type="sequence conflict" description="In Ref. 2; BAC35129." evidence="3" ref="2">
    <original>H</original>
    <variation>I</variation>
    <location>
        <position position="14"/>
    </location>
</feature>
<feature type="sequence conflict" description="In Ref. 2; BAC35129." evidence="3" ref="2">
    <original>A</original>
    <variation>V</variation>
    <location>
        <position position="513"/>
    </location>
</feature>
<comment type="subcellular location">
    <subcellularLocation>
        <location evidence="3">Membrane</location>
        <topology evidence="3">Single-pass membrane protein</topology>
    </subcellularLocation>
</comment>
<comment type="sequence caution" evidence="3">
    <conflict type="erroneous initiation">
        <sequence resource="EMBL-CDS" id="BAC35129"/>
    </conflict>
    <text>Truncated N-terminus.</text>
</comment>
<comment type="sequence caution" evidence="3">
    <conflict type="frameshift">
        <sequence resource="EMBL-CDS" id="BAC35129"/>
    </conflict>
</comment>
<organism>
    <name type="scientific">Mus musculus</name>
    <name type="common">Mouse</name>
    <dbReference type="NCBI Taxonomy" id="10090"/>
    <lineage>
        <taxon>Eukaryota</taxon>
        <taxon>Metazoa</taxon>
        <taxon>Chordata</taxon>
        <taxon>Craniata</taxon>
        <taxon>Vertebrata</taxon>
        <taxon>Euteleostomi</taxon>
        <taxon>Mammalia</taxon>
        <taxon>Eutheria</taxon>
        <taxon>Euarchontoglires</taxon>
        <taxon>Glires</taxon>
        <taxon>Rodentia</taxon>
        <taxon>Myomorpha</taxon>
        <taxon>Muroidea</taxon>
        <taxon>Muridae</taxon>
        <taxon>Murinae</taxon>
        <taxon>Mus</taxon>
        <taxon>Mus</taxon>
    </lineage>
</organism>
<evidence type="ECO:0000255" key="1"/>
<evidence type="ECO:0000256" key="2">
    <source>
        <dbReference type="SAM" id="MobiDB-lite"/>
    </source>
</evidence>
<evidence type="ECO:0000305" key="3"/>
<evidence type="ECO:0007744" key="4">
    <source>
    </source>
</evidence>
<evidence type="ECO:0007744" key="5">
    <source>
    </source>
</evidence>